<keyword id="KW-0150">Chloroplast</keyword>
<keyword id="KW-0472">Membrane</keyword>
<keyword id="KW-0520">NAD</keyword>
<keyword id="KW-0521">NADP</keyword>
<keyword id="KW-0934">Plastid</keyword>
<keyword id="KW-0618">Plastoquinone</keyword>
<keyword id="KW-0874">Quinone</keyword>
<keyword id="KW-0793">Thylakoid</keyword>
<keyword id="KW-1278">Translocase</keyword>
<keyword id="KW-0812">Transmembrane</keyword>
<keyword id="KW-1133">Transmembrane helix</keyword>
<keyword id="KW-0813">Transport</keyword>
<gene>
    <name evidence="1" type="primary">ndhC</name>
</gene>
<dbReference type="EC" id="7.1.1.-" evidence="1"/>
<dbReference type="EMBL" id="AP009373">
    <property type="protein sequence ID" value="BAF50379.1"/>
    <property type="molecule type" value="Genomic_DNA"/>
</dbReference>
<dbReference type="RefSeq" id="YP_001123555.1">
    <property type="nucleotide sequence ID" value="NC_009272.1"/>
</dbReference>
<dbReference type="SMR" id="A4QL24"/>
<dbReference type="GeneID" id="4964707"/>
<dbReference type="GO" id="GO:0009535">
    <property type="term" value="C:chloroplast thylakoid membrane"/>
    <property type="evidence" value="ECO:0007669"/>
    <property type="project" value="UniProtKB-SubCell"/>
</dbReference>
<dbReference type="GO" id="GO:0030964">
    <property type="term" value="C:NADH dehydrogenase complex"/>
    <property type="evidence" value="ECO:0007669"/>
    <property type="project" value="TreeGrafter"/>
</dbReference>
<dbReference type="GO" id="GO:0008137">
    <property type="term" value="F:NADH dehydrogenase (ubiquinone) activity"/>
    <property type="evidence" value="ECO:0007669"/>
    <property type="project" value="InterPro"/>
</dbReference>
<dbReference type="GO" id="GO:0048038">
    <property type="term" value="F:quinone binding"/>
    <property type="evidence" value="ECO:0007669"/>
    <property type="project" value="UniProtKB-KW"/>
</dbReference>
<dbReference type="GO" id="GO:0019684">
    <property type="term" value="P:photosynthesis, light reaction"/>
    <property type="evidence" value="ECO:0007669"/>
    <property type="project" value="UniProtKB-UniRule"/>
</dbReference>
<dbReference type="FunFam" id="1.20.58.1610:FF:000001">
    <property type="entry name" value="NAD(P)H-quinone oxidoreductase subunit 3, chloroplastic"/>
    <property type="match status" value="1"/>
</dbReference>
<dbReference type="Gene3D" id="1.20.58.1610">
    <property type="entry name" value="NADH:ubiquinone/plastoquinone oxidoreductase, chain 3"/>
    <property type="match status" value="1"/>
</dbReference>
<dbReference type="HAMAP" id="MF_01394">
    <property type="entry name" value="NDH1_NuoA"/>
    <property type="match status" value="1"/>
</dbReference>
<dbReference type="InterPro" id="IPR023043">
    <property type="entry name" value="NAD(P)H_OxRDtase_bac/plastid"/>
</dbReference>
<dbReference type="InterPro" id="IPR000440">
    <property type="entry name" value="NADH_UbQ/plastoQ_OxRdtase_su3"/>
</dbReference>
<dbReference type="InterPro" id="IPR038430">
    <property type="entry name" value="NDAH_ubi_oxred_su3_sf"/>
</dbReference>
<dbReference type="PANTHER" id="PTHR11058">
    <property type="entry name" value="NADH-UBIQUINONE OXIDOREDUCTASE CHAIN 3"/>
    <property type="match status" value="1"/>
</dbReference>
<dbReference type="PANTHER" id="PTHR11058:SF9">
    <property type="entry name" value="NADH-UBIQUINONE OXIDOREDUCTASE CHAIN 3"/>
    <property type="match status" value="1"/>
</dbReference>
<dbReference type="Pfam" id="PF00507">
    <property type="entry name" value="Oxidored_q4"/>
    <property type="match status" value="1"/>
</dbReference>
<evidence type="ECO:0000255" key="1">
    <source>
        <dbReference type="HAMAP-Rule" id="MF_01394"/>
    </source>
</evidence>
<reference key="1">
    <citation type="submission" date="2007-03" db="EMBL/GenBank/DDBJ databases">
        <title>Sequencing analysis of Draba nemoroza chloroplast DNA.</title>
        <authorList>
            <person name="Hosouchi T."/>
            <person name="Tsuruoka H."/>
            <person name="Kotani H."/>
        </authorList>
    </citation>
    <scope>NUCLEOTIDE SEQUENCE [LARGE SCALE GENOMIC DNA]</scope>
</reference>
<geneLocation type="chloroplast"/>
<accession>A4QL24</accession>
<comment type="function">
    <text evidence="1">NDH shuttles electrons from NAD(P)H:plastoquinone, via FMN and iron-sulfur (Fe-S) centers, to quinones in the photosynthetic chain and possibly in a chloroplast respiratory chain. The immediate electron acceptor for the enzyme in this species is believed to be plastoquinone. Couples the redox reaction to proton translocation, and thus conserves the redox energy in a proton gradient.</text>
</comment>
<comment type="catalytic activity">
    <reaction evidence="1">
        <text>a plastoquinone + NADH + (n+1) H(+)(in) = a plastoquinol + NAD(+) + n H(+)(out)</text>
        <dbReference type="Rhea" id="RHEA:42608"/>
        <dbReference type="Rhea" id="RHEA-COMP:9561"/>
        <dbReference type="Rhea" id="RHEA-COMP:9562"/>
        <dbReference type="ChEBI" id="CHEBI:15378"/>
        <dbReference type="ChEBI" id="CHEBI:17757"/>
        <dbReference type="ChEBI" id="CHEBI:57540"/>
        <dbReference type="ChEBI" id="CHEBI:57945"/>
        <dbReference type="ChEBI" id="CHEBI:62192"/>
    </reaction>
</comment>
<comment type="catalytic activity">
    <reaction evidence="1">
        <text>a plastoquinone + NADPH + (n+1) H(+)(in) = a plastoquinol + NADP(+) + n H(+)(out)</text>
        <dbReference type="Rhea" id="RHEA:42612"/>
        <dbReference type="Rhea" id="RHEA-COMP:9561"/>
        <dbReference type="Rhea" id="RHEA-COMP:9562"/>
        <dbReference type="ChEBI" id="CHEBI:15378"/>
        <dbReference type="ChEBI" id="CHEBI:17757"/>
        <dbReference type="ChEBI" id="CHEBI:57783"/>
        <dbReference type="ChEBI" id="CHEBI:58349"/>
        <dbReference type="ChEBI" id="CHEBI:62192"/>
    </reaction>
</comment>
<comment type="subunit">
    <text evidence="1">NDH is composed of at least 16 different subunits, 5 of which are encoded in the nucleus.</text>
</comment>
<comment type="subcellular location">
    <subcellularLocation>
        <location evidence="1">Plastid</location>
        <location evidence="1">Chloroplast thylakoid membrane</location>
        <topology evidence="1">Multi-pass membrane protein</topology>
    </subcellularLocation>
</comment>
<comment type="similarity">
    <text evidence="1">Belongs to the complex I subunit 3 family.</text>
</comment>
<proteinExistence type="inferred from homology"/>
<organism>
    <name type="scientific">Draba nemorosa</name>
    <name type="common">Woodland whitlowgrass</name>
    <dbReference type="NCBI Taxonomy" id="171822"/>
    <lineage>
        <taxon>Eukaryota</taxon>
        <taxon>Viridiplantae</taxon>
        <taxon>Streptophyta</taxon>
        <taxon>Embryophyta</taxon>
        <taxon>Tracheophyta</taxon>
        <taxon>Spermatophyta</taxon>
        <taxon>Magnoliopsida</taxon>
        <taxon>eudicotyledons</taxon>
        <taxon>Gunneridae</taxon>
        <taxon>Pentapetalae</taxon>
        <taxon>rosids</taxon>
        <taxon>malvids</taxon>
        <taxon>Brassicales</taxon>
        <taxon>Brassicaceae</taxon>
        <taxon>Arabideae</taxon>
        <taxon>Draba</taxon>
    </lineage>
</organism>
<feature type="chain" id="PRO_0000362830" description="NAD(P)H-quinone oxidoreductase subunit 3, chloroplastic">
    <location>
        <begin position="1"/>
        <end position="120"/>
    </location>
</feature>
<feature type="transmembrane region" description="Helical" evidence="1">
    <location>
        <begin position="9"/>
        <end position="29"/>
    </location>
</feature>
<feature type="transmembrane region" description="Helical" evidence="1">
    <location>
        <begin position="64"/>
        <end position="84"/>
    </location>
</feature>
<feature type="transmembrane region" description="Helical" evidence="1">
    <location>
        <begin position="88"/>
        <end position="108"/>
    </location>
</feature>
<name>NU3C_DRANE</name>
<protein>
    <recommendedName>
        <fullName evidence="1">NAD(P)H-quinone oxidoreductase subunit 3, chloroplastic</fullName>
        <ecNumber evidence="1">7.1.1.-</ecNumber>
    </recommendedName>
    <alternativeName>
        <fullName evidence="1">NAD(P)H dehydrogenase subunit 3</fullName>
    </alternativeName>
    <alternativeName>
        <fullName evidence="1">NADH-plastoquinone oxidoreductase subunit 3</fullName>
    </alternativeName>
</protein>
<sequence>MFLLYEYDIFWAFLIISSAIPVLAFLISGVLSPIRKGPEKLSSYESGIEPIGDAWLQFRIRYYMFALVFVVFDVETVFLYPWAMSFDVLGVSAFLEAFIFVLILILGLVYAWRKGALEWS</sequence>